<sequence length="214" mass="24921">MRVKHKPWAKDRLEEFPAIYIKNPEDFKGQWHEVFGNDNPIHIEIGSGKGQFISGMAKANPEINYIGIEMIESVLVSALDKAIEVDVPNLRLVARDAKLLEDCFEKGEIAQIYLNFSDPWPKKRHTKRRLTNPTFLTIYERLLPKAGEIHFKTDNRSLFEYSLVAFSEYNMLLTFVSLDLHNSDYEGNIKTEYEEKFSAKGFPIYRLEAKFDRN</sequence>
<gene>
    <name evidence="2" type="primary">trmB</name>
    <name type="ordered locus">lmo1615</name>
</gene>
<feature type="chain" id="PRO_0000171345" description="tRNA (guanine-N(7)-)-methyltransferase">
    <location>
        <begin position="1"/>
        <end position="214"/>
    </location>
</feature>
<feature type="active site" evidence="1">
    <location>
        <position position="118"/>
    </location>
</feature>
<feature type="binding site" evidence="2">
    <location>
        <position position="44"/>
    </location>
    <ligand>
        <name>S-adenosyl-L-methionine</name>
        <dbReference type="ChEBI" id="CHEBI:59789"/>
    </ligand>
</feature>
<feature type="binding site" evidence="2">
    <location>
        <position position="69"/>
    </location>
    <ligand>
        <name>S-adenosyl-L-methionine</name>
        <dbReference type="ChEBI" id="CHEBI:59789"/>
    </ligand>
</feature>
<feature type="binding site" evidence="2">
    <location>
        <position position="96"/>
    </location>
    <ligand>
        <name>S-adenosyl-L-methionine</name>
        <dbReference type="ChEBI" id="CHEBI:59789"/>
    </ligand>
</feature>
<feature type="binding site" evidence="2">
    <location>
        <position position="118"/>
    </location>
    <ligand>
        <name>S-adenosyl-L-methionine</name>
        <dbReference type="ChEBI" id="CHEBI:59789"/>
    </ligand>
</feature>
<feature type="binding site" evidence="2">
    <location>
        <position position="122"/>
    </location>
    <ligand>
        <name>substrate</name>
    </ligand>
</feature>
<feature type="binding site" evidence="2">
    <location>
        <position position="154"/>
    </location>
    <ligand>
        <name>substrate</name>
    </ligand>
</feature>
<feature type="binding site" evidence="2">
    <location>
        <begin position="191"/>
        <end position="194"/>
    </location>
    <ligand>
        <name>substrate</name>
    </ligand>
</feature>
<evidence type="ECO:0000250" key="1"/>
<evidence type="ECO:0000255" key="2">
    <source>
        <dbReference type="HAMAP-Rule" id="MF_01057"/>
    </source>
</evidence>
<dbReference type="EC" id="2.1.1.33" evidence="2"/>
<dbReference type="EMBL" id="AL591980">
    <property type="protein sequence ID" value="CAC99693.1"/>
    <property type="molecule type" value="Genomic_DNA"/>
</dbReference>
<dbReference type="PIR" id="AG1276">
    <property type="entry name" value="AG1276"/>
</dbReference>
<dbReference type="RefSeq" id="NP_465140.1">
    <property type="nucleotide sequence ID" value="NC_003210.1"/>
</dbReference>
<dbReference type="RefSeq" id="WP_003723580.1">
    <property type="nucleotide sequence ID" value="NZ_CP149495.1"/>
</dbReference>
<dbReference type="SMR" id="Q8Y6R8"/>
<dbReference type="STRING" id="169963.gene:17594272"/>
<dbReference type="PaxDb" id="169963-lmo1615"/>
<dbReference type="EnsemblBacteria" id="CAC99693">
    <property type="protein sequence ID" value="CAC99693"/>
    <property type="gene ID" value="CAC99693"/>
</dbReference>
<dbReference type="GeneID" id="985730"/>
<dbReference type="KEGG" id="lmo:lmo1615"/>
<dbReference type="PATRIC" id="fig|169963.11.peg.1658"/>
<dbReference type="eggNOG" id="COG0220">
    <property type="taxonomic scope" value="Bacteria"/>
</dbReference>
<dbReference type="HOGENOM" id="CLU_050910_2_1_9"/>
<dbReference type="OrthoDB" id="9802090at2"/>
<dbReference type="PhylomeDB" id="Q8Y6R8"/>
<dbReference type="BioCyc" id="LMON169963:LMO1615-MONOMER"/>
<dbReference type="UniPathway" id="UPA00989"/>
<dbReference type="Proteomes" id="UP000000817">
    <property type="component" value="Chromosome"/>
</dbReference>
<dbReference type="GO" id="GO:0043527">
    <property type="term" value="C:tRNA methyltransferase complex"/>
    <property type="evidence" value="ECO:0000318"/>
    <property type="project" value="GO_Central"/>
</dbReference>
<dbReference type="GO" id="GO:0008176">
    <property type="term" value="F:tRNA (guanine(46)-N7)-methyltransferase activity"/>
    <property type="evidence" value="ECO:0000318"/>
    <property type="project" value="GO_Central"/>
</dbReference>
<dbReference type="GO" id="GO:0036265">
    <property type="term" value="P:RNA (guanine-N7)-methylation"/>
    <property type="evidence" value="ECO:0000318"/>
    <property type="project" value="GO_Central"/>
</dbReference>
<dbReference type="GO" id="GO:0030488">
    <property type="term" value="P:tRNA methylation"/>
    <property type="evidence" value="ECO:0000318"/>
    <property type="project" value="GO_Central"/>
</dbReference>
<dbReference type="CDD" id="cd02440">
    <property type="entry name" value="AdoMet_MTases"/>
    <property type="match status" value="1"/>
</dbReference>
<dbReference type="FunFam" id="3.40.50.150:FF:000035">
    <property type="entry name" value="tRNA (guanine-N(7)-)-methyltransferase"/>
    <property type="match status" value="1"/>
</dbReference>
<dbReference type="Gene3D" id="3.40.50.150">
    <property type="entry name" value="Vaccinia Virus protein VP39"/>
    <property type="match status" value="1"/>
</dbReference>
<dbReference type="HAMAP" id="MF_01057">
    <property type="entry name" value="tRNA_methyltr_TrmB"/>
    <property type="match status" value="1"/>
</dbReference>
<dbReference type="InterPro" id="IPR029063">
    <property type="entry name" value="SAM-dependent_MTases_sf"/>
</dbReference>
<dbReference type="InterPro" id="IPR003358">
    <property type="entry name" value="tRNA_(Gua-N-7)_MeTrfase_Trmb"/>
</dbReference>
<dbReference type="InterPro" id="IPR055361">
    <property type="entry name" value="tRNA_methyltr_TrmB_bact"/>
</dbReference>
<dbReference type="NCBIfam" id="NF001080">
    <property type="entry name" value="PRK00121.2-2"/>
    <property type="match status" value="1"/>
</dbReference>
<dbReference type="NCBIfam" id="TIGR00091">
    <property type="entry name" value="tRNA (guanosine(46)-N7)-methyltransferase TrmB"/>
    <property type="match status" value="1"/>
</dbReference>
<dbReference type="PANTHER" id="PTHR23417">
    <property type="entry name" value="3-DEOXY-D-MANNO-OCTULOSONIC-ACID TRANSFERASE/TRNA GUANINE-N 7 - -METHYLTRANSFERASE"/>
    <property type="match status" value="1"/>
</dbReference>
<dbReference type="PANTHER" id="PTHR23417:SF14">
    <property type="entry name" value="PENTACOTRIPEPTIDE-REPEAT REGION OF PRORP DOMAIN-CONTAINING PROTEIN"/>
    <property type="match status" value="1"/>
</dbReference>
<dbReference type="Pfam" id="PF02390">
    <property type="entry name" value="Methyltransf_4"/>
    <property type="match status" value="1"/>
</dbReference>
<dbReference type="SUPFAM" id="SSF53335">
    <property type="entry name" value="S-adenosyl-L-methionine-dependent methyltransferases"/>
    <property type="match status" value="1"/>
</dbReference>
<dbReference type="PROSITE" id="PS51625">
    <property type="entry name" value="SAM_MT_TRMB"/>
    <property type="match status" value="1"/>
</dbReference>
<proteinExistence type="inferred from homology"/>
<organism>
    <name type="scientific">Listeria monocytogenes serovar 1/2a (strain ATCC BAA-679 / EGD-e)</name>
    <dbReference type="NCBI Taxonomy" id="169963"/>
    <lineage>
        <taxon>Bacteria</taxon>
        <taxon>Bacillati</taxon>
        <taxon>Bacillota</taxon>
        <taxon>Bacilli</taxon>
        <taxon>Bacillales</taxon>
        <taxon>Listeriaceae</taxon>
        <taxon>Listeria</taxon>
    </lineage>
</organism>
<comment type="function">
    <text evidence="2">Catalyzes the formation of N(7)-methylguanine at position 46 (m7G46) in tRNA.</text>
</comment>
<comment type="catalytic activity">
    <reaction evidence="2">
        <text>guanosine(46) in tRNA + S-adenosyl-L-methionine = N(7)-methylguanosine(46) in tRNA + S-adenosyl-L-homocysteine</text>
        <dbReference type="Rhea" id="RHEA:42708"/>
        <dbReference type="Rhea" id="RHEA-COMP:10188"/>
        <dbReference type="Rhea" id="RHEA-COMP:10189"/>
        <dbReference type="ChEBI" id="CHEBI:57856"/>
        <dbReference type="ChEBI" id="CHEBI:59789"/>
        <dbReference type="ChEBI" id="CHEBI:74269"/>
        <dbReference type="ChEBI" id="CHEBI:74480"/>
        <dbReference type="EC" id="2.1.1.33"/>
    </reaction>
</comment>
<comment type="pathway">
    <text evidence="2">tRNA modification; N(7)-methylguanine-tRNA biosynthesis.</text>
</comment>
<comment type="similarity">
    <text evidence="2">Belongs to the class I-like SAM-binding methyltransferase superfamily. TrmB family.</text>
</comment>
<reference key="1">
    <citation type="journal article" date="2001" name="Science">
        <title>Comparative genomics of Listeria species.</title>
        <authorList>
            <person name="Glaser P."/>
            <person name="Frangeul L."/>
            <person name="Buchrieser C."/>
            <person name="Rusniok C."/>
            <person name="Amend A."/>
            <person name="Baquero F."/>
            <person name="Berche P."/>
            <person name="Bloecker H."/>
            <person name="Brandt P."/>
            <person name="Chakraborty T."/>
            <person name="Charbit A."/>
            <person name="Chetouani F."/>
            <person name="Couve E."/>
            <person name="de Daruvar A."/>
            <person name="Dehoux P."/>
            <person name="Domann E."/>
            <person name="Dominguez-Bernal G."/>
            <person name="Duchaud E."/>
            <person name="Durant L."/>
            <person name="Dussurget O."/>
            <person name="Entian K.-D."/>
            <person name="Fsihi H."/>
            <person name="Garcia-del Portillo F."/>
            <person name="Garrido P."/>
            <person name="Gautier L."/>
            <person name="Goebel W."/>
            <person name="Gomez-Lopez N."/>
            <person name="Hain T."/>
            <person name="Hauf J."/>
            <person name="Jackson D."/>
            <person name="Jones L.-M."/>
            <person name="Kaerst U."/>
            <person name="Kreft J."/>
            <person name="Kuhn M."/>
            <person name="Kunst F."/>
            <person name="Kurapkat G."/>
            <person name="Madueno E."/>
            <person name="Maitournam A."/>
            <person name="Mata Vicente J."/>
            <person name="Ng E."/>
            <person name="Nedjari H."/>
            <person name="Nordsiek G."/>
            <person name="Novella S."/>
            <person name="de Pablos B."/>
            <person name="Perez-Diaz J.-C."/>
            <person name="Purcell R."/>
            <person name="Remmel B."/>
            <person name="Rose M."/>
            <person name="Schlueter T."/>
            <person name="Simoes N."/>
            <person name="Tierrez A."/>
            <person name="Vazquez-Boland J.-A."/>
            <person name="Voss H."/>
            <person name="Wehland J."/>
            <person name="Cossart P."/>
        </authorList>
    </citation>
    <scope>NUCLEOTIDE SEQUENCE [LARGE SCALE GENOMIC DNA]</scope>
    <source>
        <strain>ATCC BAA-679 / EGD-e</strain>
    </source>
</reference>
<keyword id="KW-0489">Methyltransferase</keyword>
<keyword id="KW-1185">Reference proteome</keyword>
<keyword id="KW-0949">S-adenosyl-L-methionine</keyword>
<keyword id="KW-0808">Transferase</keyword>
<keyword id="KW-0819">tRNA processing</keyword>
<accession>Q8Y6R8</accession>
<name>TRMB_LISMO</name>
<protein>
    <recommendedName>
        <fullName evidence="2">tRNA (guanine-N(7)-)-methyltransferase</fullName>
        <ecNumber evidence="2">2.1.1.33</ecNumber>
    </recommendedName>
    <alternativeName>
        <fullName evidence="2">tRNA (guanine(46)-N(7))-methyltransferase</fullName>
    </alternativeName>
    <alternativeName>
        <fullName evidence="2">tRNA(m7G46)-methyltransferase</fullName>
    </alternativeName>
</protein>